<reference key="1">
    <citation type="submission" date="2007-06" db="EMBL/GenBank/DDBJ databases">
        <title>Complete sequence of Marinomonas sp. MWYL1.</title>
        <authorList>
            <consortium name="US DOE Joint Genome Institute"/>
            <person name="Copeland A."/>
            <person name="Lucas S."/>
            <person name="Lapidus A."/>
            <person name="Barry K."/>
            <person name="Glavina del Rio T."/>
            <person name="Dalin E."/>
            <person name="Tice H."/>
            <person name="Pitluck S."/>
            <person name="Kiss H."/>
            <person name="Brettin T."/>
            <person name="Bruce D."/>
            <person name="Detter J.C."/>
            <person name="Han C."/>
            <person name="Schmutz J."/>
            <person name="Larimer F."/>
            <person name="Land M."/>
            <person name="Hauser L."/>
            <person name="Kyrpides N."/>
            <person name="Kim E."/>
            <person name="Johnston A.W.B."/>
            <person name="Todd J.D."/>
            <person name="Rogers R."/>
            <person name="Wexler M."/>
            <person name="Bond P.L."/>
            <person name="Li Y."/>
            <person name="Richardson P."/>
        </authorList>
    </citation>
    <scope>NUCLEOTIDE SEQUENCE [LARGE SCALE GENOMIC DNA]</scope>
    <source>
        <strain>MWYL1</strain>
    </source>
</reference>
<organism>
    <name type="scientific">Marinomonas sp. (strain MWYL1)</name>
    <dbReference type="NCBI Taxonomy" id="400668"/>
    <lineage>
        <taxon>Bacteria</taxon>
        <taxon>Pseudomonadati</taxon>
        <taxon>Pseudomonadota</taxon>
        <taxon>Gammaproteobacteria</taxon>
        <taxon>Oceanospirillales</taxon>
        <taxon>Oceanospirillaceae</taxon>
        <taxon>Marinomonas</taxon>
    </lineage>
</organism>
<proteinExistence type="inferred from homology"/>
<accession>A6W399</accession>
<feature type="chain" id="PRO_1000086373" description="DNA-directed RNA polymerase subunit beta">
    <location>
        <begin position="1"/>
        <end position="1366"/>
    </location>
</feature>
<evidence type="ECO:0000255" key="1">
    <source>
        <dbReference type="HAMAP-Rule" id="MF_01321"/>
    </source>
</evidence>
<comment type="function">
    <text evidence="1">DNA-dependent RNA polymerase catalyzes the transcription of DNA into RNA using the four ribonucleoside triphosphates as substrates.</text>
</comment>
<comment type="catalytic activity">
    <reaction evidence="1">
        <text>RNA(n) + a ribonucleoside 5'-triphosphate = RNA(n+1) + diphosphate</text>
        <dbReference type="Rhea" id="RHEA:21248"/>
        <dbReference type="Rhea" id="RHEA-COMP:14527"/>
        <dbReference type="Rhea" id="RHEA-COMP:17342"/>
        <dbReference type="ChEBI" id="CHEBI:33019"/>
        <dbReference type="ChEBI" id="CHEBI:61557"/>
        <dbReference type="ChEBI" id="CHEBI:140395"/>
        <dbReference type="EC" id="2.7.7.6"/>
    </reaction>
</comment>
<comment type="subunit">
    <text evidence="1">The RNAP catalytic core consists of 2 alpha, 1 beta, 1 beta' and 1 omega subunit. When a sigma factor is associated with the core the holoenzyme is formed, which can initiate transcription.</text>
</comment>
<comment type="similarity">
    <text evidence="1">Belongs to the RNA polymerase beta chain family.</text>
</comment>
<keyword id="KW-0240">DNA-directed RNA polymerase</keyword>
<keyword id="KW-0548">Nucleotidyltransferase</keyword>
<keyword id="KW-0804">Transcription</keyword>
<keyword id="KW-0808">Transferase</keyword>
<protein>
    <recommendedName>
        <fullName evidence="1">DNA-directed RNA polymerase subunit beta</fullName>
        <shortName evidence="1">RNAP subunit beta</shortName>
        <ecNumber evidence="1">2.7.7.6</ecNumber>
    </recommendedName>
    <alternativeName>
        <fullName evidence="1">RNA polymerase subunit beta</fullName>
    </alternativeName>
    <alternativeName>
        <fullName evidence="1">Transcriptase subunit beta</fullName>
    </alternativeName>
</protein>
<gene>
    <name evidence="1" type="primary">rpoB</name>
    <name type="ordered locus">Mmwyl1_4283</name>
</gene>
<name>RPOB_MARMS</name>
<sequence>MAYSYTEKKRIRKDFGKLPPVLDVPYLLAIQLESYRNFLQEGKSLAERGELGLHGAFKSVFPMVSFSGNAALEYVDYRLGKPVFDVKECQLRGVTYAAPLRVRVRLIIYDKESSNKAIKDIREQEVYMGEIPLMTDNGTFVINGTERVIVSQLHRSPGVFFDHDRGKTHSSGKLLHSARIIPYRGSWLDFEFDPKDCVFVRIDRRRKLPATILLRALGYGTEQILDTFFDSTRFYLKRDGFEMDLVANRLRGETALFNIADANGELIVEEGRRITAKHIRVMEKSGLERLSVPLEYMLGKVTAKNLVHPATGELIAEANTELSVDLLEALVSSGITEVDTLYTNDLDNGPFISDTLRIDPTSNQLEALVEIYRMMRPGEPPTKESAEGLFQGLFFSEDRYDLSGVGRMKFNRRLGREEDTGAGVLDNDDIVAVLKTLLDIRNGNGMVDDIDHLGNRRVRSVGEMAENQFRVGLVRVERAVKERLSMAEADGLMPQDLLNAKPVAAAIKEFFGSSQLSQFMDQNNPLSEVTHKRRVSALGPGGLTRERAGFEVRDVHATHYGRVCPIETPEGPNIGLINSLSTYARTNSYGFLETPYRKIVDGKQTDETVYVSAIDEAKYVIAQASANVDAEGRLVDELVQVRHMHETTLIPKEKVNLMDVSPRQVVSVAASLIPFLEHDDANRALMGSNMQRQAVPTLKADKPVVGTGMEKNVAKDSGVCIVANRGGVIESVDASRIVVRVNSEETIAGEAGVDIYNLTKYVRSNQNTCINQRTLVMKGERIASGDIMADGPSVDMGELALGQNMRIAFMPWNGFNFEDSILVSERVVEEDRFTSIHIQELTCVARDTKLGPEEITADIPNVGEGALSKLDQSGIVYIGAEVEPGDILVGKVTPKGETQLTPEEKLLRAIFGEKASDVKDTSQRVKTGTRGTVIDVQVFTRDGIEKDDRAKFIEKSQLDQVRKDLNEEFRIVEKATFERLAEALIGQQAEGGPGLARNAIITEEYLANLDHPEWFKIRVANEDASEQLEKAQAALIERRKELDAKFEDKKRKLQTGDDLAPGVLKIVKVYVAIKRRIQPGDKMAGRHGNKGVISKIMPVEDMPYDENGDPVDIVLNPLGVPSRMNVGQVLETHLGAASKGLGRKINEMLVVEREKAEAVAELRSFLGEIYNGYEGDLRCARTEDLDSFTDEEILTLASNLTGGVPMASGAFDGAKESEIKRMLRLAGINESGQVKLFNGRTGDAFERPVTVGYMYMLKLNHLVDDKMHARSTGSYSLVTQQPLGGKAQFGGQRFGEMEVWALEAYGAAYTLQEMLTVKSDDVNGRTKMYKNIVDGDHRMEPGMPESFNVLVKEIRSLGIDIELENE</sequence>
<dbReference type="EC" id="2.7.7.6" evidence="1"/>
<dbReference type="EMBL" id="CP000749">
    <property type="protein sequence ID" value="ABR73178.1"/>
    <property type="molecule type" value="Genomic_DNA"/>
</dbReference>
<dbReference type="SMR" id="A6W399"/>
<dbReference type="STRING" id="400668.Mmwyl1_4283"/>
<dbReference type="KEGG" id="mmw:Mmwyl1_4283"/>
<dbReference type="eggNOG" id="COG0085">
    <property type="taxonomic scope" value="Bacteria"/>
</dbReference>
<dbReference type="HOGENOM" id="CLU_000524_4_3_6"/>
<dbReference type="OrthoDB" id="9803954at2"/>
<dbReference type="GO" id="GO:0000428">
    <property type="term" value="C:DNA-directed RNA polymerase complex"/>
    <property type="evidence" value="ECO:0007669"/>
    <property type="project" value="UniProtKB-KW"/>
</dbReference>
<dbReference type="GO" id="GO:0003677">
    <property type="term" value="F:DNA binding"/>
    <property type="evidence" value="ECO:0007669"/>
    <property type="project" value="UniProtKB-UniRule"/>
</dbReference>
<dbReference type="GO" id="GO:0003899">
    <property type="term" value="F:DNA-directed RNA polymerase activity"/>
    <property type="evidence" value="ECO:0007669"/>
    <property type="project" value="UniProtKB-UniRule"/>
</dbReference>
<dbReference type="GO" id="GO:0032549">
    <property type="term" value="F:ribonucleoside binding"/>
    <property type="evidence" value="ECO:0007669"/>
    <property type="project" value="InterPro"/>
</dbReference>
<dbReference type="GO" id="GO:0006351">
    <property type="term" value="P:DNA-templated transcription"/>
    <property type="evidence" value="ECO:0007669"/>
    <property type="project" value="UniProtKB-UniRule"/>
</dbReference>
<dbReference type="CDD" id="cd00653">
    <property type="entry name" value="RNA_pol_B_RPB2"/>
    <property type="match status" value="1"/>
</dbReference>
<dbReference type="FunFam" id="2.40.50.100:FF:000006">
    <property type="entry name" value="DNA-directed RNA polymerase subunit beta"/>
    <property type="match status" value="1"/>
</dbReference>
<dbReference type="FunFam" id="3.90.1110.10:FF:000001">
    <property type="entry name" value="DNA-directed RNA polymerase subunit beta"/>
    <property type="match status" value="1"/>
</dbReference>
<dbReference type="FunFam" id="3.90.1110.10:FF:000004">
    <property type="entry name" value="DNA-directed RNA polymerase subunit beta"/>
    <property type="match status" value="1"/>
</dbReference>
<dbReference type="FunFam" id="3.90.1800.10:FF:000001">
    <property type="entry name" value="DNA-directed RNA polymerase subunit beta"/>
    <property type="match status" value="1"/>
</dbReference>
<dbReference type="Gene3D" id="2.40.50.100">
    <property type="match status" value="1"/>
</dbReference>
<dbReference type="Gene3D" id="2.40.50.150">
    <property type="match status" value="1"/>
</dbReference>
<dbReference type="Gene3D" id="3.90.1100.10">
    <property type="match status" value="2"/>
</dbReference>
<dbReference type="Gene3D" id="2.30.150.10">
    <property type="entry name" value="DNA-directed RNA polymerase, beta subunit, external 1 domain"/>
    <property type="match status" value="1"/>
</dbReference>
<dbReference type="Gene3D" id="2.40.270.10">
    <property type="entry name" value="DNA-directed RNA polymerase, subunit 2, domain 6"/>
    <property type="match status" value="1"/>
</dbReference>
<dbReference type="Gene3D" id="3.90.1800.10">
    <property type="entry name" value="RNA polymerase alpha subunit dimerisation domain"/>
    <property type="match status" value="1"/>
</dbReference>
<dbReference type="Gene3D" id="3.90.1110.10">
    <property type="entry name" value="RNA polymerase Rpb2, domain 2"/>
    <property type="match status" value="1"/>
</dbReference>
<dbReference type="HAMAP" id="MF_01321">
    <property type="entry name" value="RNApol_bact_RpoB"/>
    <property type="match status" value="1"/>
</dbReference>
<dbReference type="InterPro" id="IPR042107">
    <property type="entry name" value="DNA-dir_RNA_pol_bsu_ext_1_sf"/>
</dbReference>
<dbReference type="InterPro" id="IPR019462">
    <property type="entry name" value="DNA-dir_RNA_pol_bsu_external_1"/>
</dbReference>
<dbReference type="InterPro" id="IPR015712">
    <property type="entry name" value="DNA-dir_RNA_pol_su2"/>
</dbReference>
<dbReference type="InterPro" id="IPR007120">
    <property type="entry name" value="DNA-dir_RNAP_su2_dom"/>
</dbReference>
<dbReference type="InterPro" id="IPR037033">
    <property type="entry name" value="DNA-dir_RNAP_su2_hyb_sf"/>
</dbReference>
<dbReference type="InterPro" id="IPR010243">
    <property type="entry name" value="RNA_pol_bsu_bac"/>
</dbReference>
<dbReference type="InterPro" id="IPR007121">
    <property type="entry name" value="RNA_pol_bsu_CS"/>
</dbReference>
<dbReference type="InterPro" id="IPR007644">
    <property type="entry name" value="RNA_pol_bsu_protrusion"/>
</dbReference>
<dbReference type="InterPro" id="IPR007642">
    <property type="entry name" value="RNA_pol_Rpb2_2"/>
</dbReference>
<dbReference type="InterPro" id="IPR037034">
    <property type="entry name" value="RNA_pol_Rpb2_2_sf"/>
</dbReference>
<dbReference type="InterPro" id="IPR007645">
    <property type="entry name" value="RNA_pol_Rpb2_3"/>
</dbReference>
<dbReference type="InterPro" id="IPR007641">
    <property type="entry name" value="RNA_pol_Rpb2_7"/>
</dbReference>
<dbReference type="InterPro" id="IPR014724">
    <property type="entry name" value="RNA_pol_RPB2_OB-fold"/>
</dbReference>
<dbReference type="NCBIfam" id="NF001616">
    <property type="entry name" value="PRK00405.1"/>
    <property type="match status" value="1"/>
</dbReference>
<dbReference type="NCBIfam" id="TIGR02013">
    <property type="entry name" value="rpoB"/>
    <property type="match status" value="1"/>
</dbReference>
<dbReference type="PANTHER" id="PTHR20856">
    <property type="entry name" value="DNA-DIRECTED RNA POLYMERASE I SUBUNIT 2"/>
    <property type="match status" value="1"/>
</dbReference>
<dbReference type="Pfam" id="PF04563">
    <property type="entry name" value="RNA_pol_Rpb2_1"/>
    <property type="match status" value="1"/>
</dbReference>
<dbReference type="Pfam" id="PF04561">
    <property type="entry name" value="RNA_pol_Rpb2_2"/>
    <property type="match status" value="2"/>
</dbReference>
<dbReference type="Pfam" id="PF04565">
    <property type="entry name" value="RNA_pol_Rpb2_3"/>
    <property type="match status" value="1"/>
</dbReference>
<dbReference type="Pfam" id="PF10385">
    <property type="entry name" value="RNA_pol_Rpb2_45"/>
    <property type="match status" value="1"/>
</dbReference>
<dbReference type="Pfam" id="PF00562">
    <property type="entry name" value="RNA_pol_Rpb2_6"/>
    <property type="match status" value="1"/>
</dbReference>
<dbReference type="Pfam" id="PF04560">
    <property type="entry name" value="RNA_pol_Rpb2_7"/>
    <property type="match status" value="1"/>
</dbReference>
<dbReference type="SUPFAM" id="SSF64484">
    <property type="entry name" value="beta and beta-prime subunits of DNA dependent RNA-polymerase"/>
    <property type="match status" value="1"/>
</dbReference>
<dbReference type="PROSITE" id="PS01166">
    <property type="entry name" value="RNA_POL_BETA"/>
    <property type="match status" value="1"/>
</dbReference>